<dbReference type="EC" id="6.3.5.-" evidence="1"/>
<dbReference type="EMBL" id="AL935263">
    <property type="protein sequence ID" value="CCC78537.1"/>
    <property type="molecule type" value="Genomic_DNA"/>
</dbReference>
<dbReference type="RefSeq" id="WP_003641341.1">
    <property type="nucleotide sequence ID" value="NC_004567.2"/>
</dbReference>
<dbReference type="RefSeq" id="YP_004889051.1">
    <property type="nucleotide sequence ID" value="NC_004567.2"/>
</dbReference>
<dbReference type="SMR" id="Q88XP8"/>
<dbReference type="STRING" id="220668.lp_1147"/>
<dbReference type="EnsemblBacteria" id="CCC78537">
    <property type="protein sequence ID" value="CCC78537"/>
    <property type="gene ID" value="lp_1147"/>
</dbReference>
<dbReference type="GeneID" id="89668638"/>
<dbReference type="KEGG" id="lpl:lp_1147"/>
<dbReference type="PATRIC" id="fig|220668.9.peg.968"/>
<dbReference type="eggNOG" id="COG0721">
    <property type="taxonomic scope" value="Bacteria"/>
</dbReference>
<dbReference type="HOGENOM" id="CLU_105899_1_2_9"/>
<dbReference type="OrthoDB" id="9813938at2"/>
<dbReference type="PhylomeDB" id="Q88XP8"/>
<dbReference type="Proteomes" id="UP000000432">
    <property type="component" value="Chromosome"/>
</dbReference>
<dbReference type="GO" id="GO:0050566">
    <property type="term" value="F:asparaginyl-tRNA synthase (glutamine-hydrolyzing) activity"/>
    <property type="evidence" value="ECO:0007669"/>
    <property type="project" value="RHEA"/>
</dbReference>
<dbReference type="GO" id="GO:0005524">
    <property type="term" value="F:ATP binding"/>
    <property type="evidence" value="ECO:0007669"/>
    <property type="project" value="UniProtKB-KW"/>
</dbReference>
<dbReference type="GO" id="GO:0050567">
    <property type="term" value="F:glutaminyl-tRNA synthase (glutamine-hydrolyzing) activity"/>
    <property type="evidence" value="ECO:0007669"/>
    <property type="project" value="UniProtKB-UniRule"/>
</dbReference>
<dbReference type="GO" id="GO:0070681">
    <property type="term" value="P:glutaminyl-tRNAGln biosynthesis via transamidation"/>
    <property type="evidence" value="ECO:0007669"/>
    <property type="project" value="TreeGrafter"/>
</dbReference>
<dbReference type="GO" id="GO:0006450">
    <property type="term" value="P:regulation of translational fidelity"/>
    <property type="evidence" value="ECO:0007669"/>
    <property type="project" value="InterPro"/>
</dbReference>
<dbReference type="GO" id="GO:0006412">
    <property type="term" value="P:translation"/>
    <property type="evidence" value="ECO:0007669"/>
    <property type="project" value="UniProtKB-UniRule"/>
</dbReference>
<dbReference type="Gene3D" id="1.10.20.60">
    <property type="entry name" value="Glu-tRNAGln amidotransferase C subunit, N-terminal domain"/>
    <property type="match status" value="1"/>
</dbReference>
<dbReference type="HAMAP" id="MF_00122">
    <property type="entry name" value="GatC"/>
    <property type="match status" value="1"/>
</dbReference>
<dbReference type="InterPro" id="IPR036113">
    <property type="entry name" value="Asp/Glu-ADT_sf_sub_c"/>
</dbReference>
<dbReference type="InterPro" id="IPR003837">
    <property type="entry name" value="GatC"/>
</dbReference>
<dbReference type="NCBIfam" id="TIGR00135">
    <property type="entry name" value="gatC"/>
    <property type="match status" value="1"/>
</dbReference>
<dbReference type="PANTHER" id="PTHR15004">
    <property type="entry name" value="GLUTAMYL-TRNA(GLN) AMIDOTRANSFERASE SUBUNIT C, MITOCHONDRIAL"/>
    <property type="match status" value="1"/>
</dbReference>
<dbReference type="PANTHER" id="PTHR15004:SF0">
    <property type="entry name" value="GLUTAMYL-TRNA(GLN) AMIDOTRANSFERASE SUBUNIT C, MITOCHONDRIAL"/>
    <property type="match status" value="1"/>
</dbReference>
<dbReference type="Pfam" id="PF02686">
    <property type="entry name" value="GatC"/>
    <property type="match status" value="1"/>
</dbReference>
<dbReference type="SUPFAM" id="SSF141000">
    <property type="entry name" value="Glu-tRNAGln amidotransferase C subunit"/>
    <property type="match status" value="1"/>
</dbReference>
<comment type="function">
    <text evidence="1">Allows the formation of correctly charged Asn-tRNA(Asn) or Gln-tRNA(Gln) through the transamidation of misacylated Asp-tRNA(Asn) or Glu-tRNA(Gln) in organisms which lack either or both of asparaginyl-tRNA or glutaminyl-tRNA synthetases. The reaction takes place in the presence of glutamine and ATP through an activated phospho-Asp-tRNA(Asn) or phospho-Glu-tRNA(Gln).</text>
</comment>
<comment type="catalytic activity">
    <reaction evidence="1">
        <text>L-glutamyl-tRNA(Gln) + L-glutamine + ATP + H2O = L-glutaminyl-tRNA(Gln) + L-glutamate + ADP + phosphate + H(+)</text>
        <dbReference type="Rhea" id="RHEA:17521"/>
        <dbReference type="Rhea" id="RHEA-COMP:9681"/>
        <dbReference type="Rhea" id="RHEA-COMP:9684"/>
        <dbReference type="ChEBI" id="CHEBI:15377"/>
        <dbReference type="ChEBI" id="CHEBI:15378"/>
        <dbReference type="ChEBI" id="CHEBI:29985"/>
        <dbReference type="ChEBI" id="CHEBI:30616"/>
        <dbReference type="ChEBI" id="CHEBI:43474"/>
        <dbReference type="ChEBI" id="CHEBI:58359"/>
        <dbReference type="ChEBI" id="CHEBI:78520"/>
        <dbReference type="ChEBI" id="CHEBI:78521"/>
        <dbReference type="ChEBI" id="CHEBI:456216"/>
    </reaction>
</comment>
<comment type="catalytic activity">
    <reaction evidence="1">
        <text>L-aspartyl-tRNA(Asn) + L-glutamine + ATP + H2O = L-asparaginyl-tRNA(Asn) + L-glutamate + ADP + phosphate + 2 H(+)</text>
        <dbReference type="Rhea" id="RHEA:14513"/>
        <dbReference type="Rhea" id="RHEA-COMP:9674"/>
        <dbReference type="Rhea" id="RHEA-COMP:9677"/>
        <dbReference type="ChEBI" id="CHEBI:15377"/>
        <dbReference type="ChEBI" id="CHEBI:15378"/>
        <dbReference type="ChEBI" id="CHEBI:29985"/>
        <dbReference type="ChEBI" id="CHEBI:30616"/>
        <dbReference type="ChEBI" id="CHEBI:43474"/>
        <dbReference type="ChEBI" id="CHEBI:58359"/>
        <dbReference type="ChEBI" id="CHEBI:78515"/>
        <dbReference type="ChEBI" id="CHEBI:78516"/>
        <dbReference type="ChEBI" id="CHEBI:456216"/>
    </reaction>
</comment>
<comment type="subunit">
    <text evidence="1">Heterotrimer of A, B and C subunits.</text>
</comment>
<comment type="similarity">
    <text evidence="1">Belongs to the GatC family.</text>
</comment>
<feature type="chain" id="PRO_0000105304" description="Aspartyl/glutamyl-tRNA(Asn/Gln) amidotransferase subunit C">
    <location>
        <begin position="1"/>
        <end position="106"/>
    </location>
</feature>
<name>GATC_LACPL</name>
<keyword id="KW-0067">ATP-binding</keyword>
<keyword id="KW-0436">Ligase</keyword>
<keyword id="KW-0547">Nucleotide-binding</keyword>
<keyword id="KW-0648">Protein biosynthesis</keyword>
<keyword id="KW-1185">Reference proteome</keyword>
<proteinExistence type="inferred from homology"/>
<gene>
    <name evidence="1" type="primary">gatC</name>
    <name type="ordered locus">lp_1147</name>
</gene>
<sequence length="106" mass="11566">MAEERINAEQVQHVASLAKLEFTPDQLAMFTPQLEKIIGMFEELSTVDTTGVPVTSRMSDHTNTLREDVAVKSDEALREALLKNAPETANGLIKVPAIIDESGDGE</sequence>
<protein>
    <recommendedName>
        <fullName evidence="1">Aspartyl/glutamyl-tRNA(Asn/Gln) amidotransferase subunit C</fullName>
        <shortName evidence="1">Asp/Glu-ADT subunit C</shortName>
        <ecNumber evidence="1">6.3.5.-</ecNumber>
    </recommendedName>
</protein>
<evidence type="ECO:0000255" key="1">
    <source>
        <dbReference type="HAMAP-Rule" id="MF_00122"/>
    </source>
</evidence>
<reference key="1">
    <citation type="journal article" date="2003" name="Proc. Natl. Acad. Sci. U.S.A.">
        <title>Complete genome sequence of Lactobacillus plantarum WCFS1.</title>
        <authorList>
            <person name="Kleerebezem M."/>
            <person name="Boekhorst J."/>
            <person name="van Kranenburg R."/>
            <person name="Molenaar D."/>
            <person name="Kuipers O.P."/>
            <person name="Leer R."/>
            <person name="Tarchini R."/>
            <person name="Peters S.A."/>
            <person name="Sandbrink H.M."/>
            <person name="Fiers M.W.E.J."/>
            <person name="Stiekema W."/>
            <person name="Klein Lankhorst R.M."/>
            <person name="Bron P.A."/>
            <person name="Hoffer S.M."/>
            <person name="Nierop Groot M.N."/>
            <person name="Kerkhoven R."/>
            <person name="De Vries M."/>
            <person name="Ursing B."/>
            <person name="De Vos W.M."/>
            <person name="Siezen R.J."/>
        </authorList>
    </citation>
    <scope>NUCLEOTIDE SEQUENCE [LARGE SCALE GENOMIC DNA]</scope>
    <source>
        <strain>ATCC BAA-793 / NCIMB 8826 / WCFS1</strain>
    </source>
</reference>
<reference key="2">
    <citation type="journal article" date="2012" name="J. Bacteriol.">
        <title>Complete resequencing and reannotation of the Lactobacillus plantarum WCFS1 genome.</title>
        <authorList>
            <person name="Siezen R.J."/>
            <person name="Francke C."/>
            <person name="Renckens B."/>
            <person name="Boekhorst J."/>
            <person name="Wels M."/>
            <person name="Kleerebezem M."/>
            <person name="van Hijum S.A."/>
        </authorList>
    </citation>
    <scope>NUCLEOTIDE SEQUENCE [LARGE SCALE GENOMIC DNA]</scope>
    <scope>GENOME REANNOTATION</scope>
    <source>
        <strain>ATCC BAA-793 / NCIMB 8826 / WCFS1</strain>
    </source>
</reference>
<organism>
    <name type="scientific">Lactiplantibacillus plantarum (strain ATCC BAA-793 / NCIMB 8826 / WCFS1)</name>
    <name type="common">Lactobacillus plantarum</name>
    <dbReference type="NCBI Taxonomy" id="220668"/>
    <lineage>
        <taxon>Bacteria</taxon>
        <taxon>Bacillati</taxon>
        <taxon>Bacillota</taxon>
        <taxon>Bacilli</taxon>
        <taxon>Lactobacillales</taxon>
        <taxon>Lactobacillaceae</taxon>
        <taxon>Lactiplantibacillus</taxon>
    </lineage>
</organism>
<accession>Q88XP8</accession>
<accession>F9UMU8</accession>